<evidence type="ECO:0000255" key="1">
    <source>
        <dbReference type="HAMAP-Rule" id="MF_01726"/>
    </source>
</evidence>
<dbReference type="EC" id="7.6.2.11" evidence="1"/>
<dbReference type="EMBL" id="BA000031">
    <property type="protein sequence ID" value="BAC59792.1"/>
    <property type="molecule type" value="Genomic_DNA"/>
</dbReference>
<dbReference type="RefSeq" id="NP_797908.1">
    <property type="nucleotide sequence ID" value="NC_004603.1"/>
</dbReference>
<dbReference type="RefSeq" id="WP_005495030.1">
    <property type="nucleotide sequence ID" value="NC_004603.1"/>
</dbReference>
<dbReference type="SMR" id="Q87PH3"/>
<dbReference type="GeneID" id="1189036"/>
<dbReference type="KEGG" id="vpa:VP1529"/>
<dbReference type="PATRIC" id="fig|223926.6.peg.1460"/>
<dbReference type="eggNOG" id="COG3842">
    <property type="taxonomic scope" value="Bacteria"/>
</dbReference>
<dbReference type="HOGENOM" id="CLU_000604_1_1_6"/>
<dbReference type="Proteomes" id="UP000002493">
    <property type="component" value="Chromosome 1"/>
</dbReference>
<dbReference type="GO" id="GO:0043190">
    <property type="term" value="C:ATP-binding cassette (ABC) transporter complex"/>
    <property type="evidence" value="ECO:0007669"/>
    <property type="project" value="InterPro"/>
</dbReference>
<dbReference type="GO" id="GO:0015594">
    <property type="term" value="F:ABC-type putrescine transporter activity"/>
    <property type="evidence" value="ECO:0007669"/>
    <property type="project" value="InterPro"/>
</dbReference>
<dbReference type="GO" id="GO:0005524">
    <property type="term" value="F:ATP binding"/>
    <property type="evidence" value="ECO:0007669"/>
    <property type="project" value="UniProtKB-KW"/>
</dbReference>
<dbReference type="GO" id="GO:0016887">
    <property type="term" value="F:ATP hydrolysis activity"/>
    <property type="evidence" value="ECO:0007669"/>
    <property type="project" value="InterPro"/>
</dbReference>
<dbReference type="CDD" id="cd03300">
    <property type="entry name" value="ABC_PotA_N"/>
    <property type="match status" value="1"/>
</dbReference>
<dbReference type="FunFam" id="3.40.50.300:FF:000133">
    <property type="entry name" value="Spermidine/putrescine import ATP-binding protein PotA"/>
    <property type="match status" value="1"/>
</dbReference>
<dbReference type="Gene3D" id="2.40.50.100">
    <property type="match status" value="1"/>
</dbReference>
<dbReference type="Gene3D" id="3.40.50.300">
    <property type="entry name" value="P-loop containing nucleotide triphosphate hydrolases"/>
    <property type="match status" value="1"/>
</dbReference>
<dbReference type="InterPro" id="IPR003593">
    <property type="entry name" value="AAA+_ATPase"/>
</dbReference>
<dbReference type="InterPro" id="IPR050093">
    <property type="entry name" value="ABC_SmlMolc_Importer"/>
</dbReference>
<dbReference type="InterPro" id="IPR003439">
    <property type="entry name" value="ABC_transporter-like_ATP-bd"/>
</dbReference>
<dbReference type="InterPro" id="IPR017871">
    <property type="entry name" value="ABC_transporter-like_CS"/>
</dbReference>
<dbReference type="InterPro" id="IPR008995">
    <property type="entry name" value="Mo/tungstate-bd_C_term_dom"/>
</dbReference>
<dbReference type="InterPro" id="IPR027417">
    <property type="entry name" value="P-loop_NTPase"/>
</dbReference>
<dbReference type="InterPro" id="IPR005893">
    <property type="entry name" value="PotA-like"/>
</dbReference>
<dbReference type="InterPro" id="IPR017879">
    <property type="entry name" value="PotA_ATP-bd"/>
</dbReference>
<dbReference type="InterPro" id="IPR013611">
    <property type="entry name" value="Transp-assoc_OB_typ2"/>
</dbReference>
<dbReference type="NCBIfam" id="TIGR01187">
    <property type="entry name" value="potA"/>
    <property type="match status" value="1"/>
</dbReference>
<dbReference type="NCBIfam" id="NF006987">
    <property type="entry name" value="PRK09452.1"/>
    <property type="match status" value="1"/>
</dbReference>
<dbReference type="PANTHER" id="PTHR42781">
    <property type="entry name" value="SPERMIDINE/PUTRESCINE IMPORT ATP-BINDING PROTEIN POTA"/>
    <property type="match status" value="1"/>
</dbReference>
<dbReference type="PANTHER" id="PTHR42781:SF4">
    <property type="entry name" value="SPERMIDINE_PUTRESCINE IMPORT ATP-BINDING PROTEIN POTA"/>
    <property type="match status" value="1"/>
</dbReference>
<dbReference type="Pfam" id="PF00005">
    <property type="entry name" value="ABC_tran"/>
    <property type="match status" value="1"/>
</dbReference>
<dbReference type="Pfam" id="PF08402">
    <property type="entry name" value="TOBE_2"/>
    <property type="match status" value="1"/>
</dbReference>
<dbReference type="SMART" id="SM00382">
    <property type="entry name" value="AAA"/>
    <property type="match status" value="1"/>
</dbReference>
<dbReference type="SUPFAM" id="SSF50331">
    <property type="entry name" value="MOP-like"/>
    <property type="match status" value="1"/>
</dbReference>
<dbReference type="SUPFAM" id="SSF52540">
    <property type="entry name" value="P-loop containing nucleoside triphosphate hydrolases"/>
    <property type="match status" value="1"/>
</dbReference>
<dbReference type="PROSITE" id="PS00211">
    <property type="entry name" value="ABC_TRANSPORTER_1"/>
    <property type="match status" value="1"/>
</dbReference>
<dbReference type="PROSITE" id="PS50893">
    <property type="entry name" value="ABC_TRANSPORTER_2"/>
    <property type="match status" value="1"/>
</dbReference>
<dbReference type="PROSITE" id="PS51305">
    <property type="entry name" value="POTA"/>
    <property type="match status" value="1"/>
</dbReference>
<name>POTA_VIBPA</name>
<comment type="function">
    <text evidence="1">Part of the ABC transporter complex PotABCD involved in spermidine/putrescine import. Responsible for energy coupling to the transport system.</text>
</comment>
<comment type="catalytic activity">
    <reaction evidence="1">
        <text>ATP + H2O + polyamine-[polyamine-binding protein]Side 1 = ADP + phosphate + polyamineSide 2 + [polyamine-binding protein]Side 1.</text>
        <dbReference type="EC" id="7.6.2.11"/>
    </reaction>
</comment>
<comment type="subunit">
    <text evidence="1">The complex is composed of two ATP-binding proteins (PotA), two transmembrane proteins (PotB and PotC) and a solute-binding protein (PotD).</text>
</comment>
<comment type="subcellular location">
    <subcellularLocation>
        <location evidence="1">Cell inner membrane</location>
        <topology evidence="1">Peripheral membrane protein</topology>
    </subcellularLocation>
</comment>
<comment type="similarity">
    <text evidence="1">Belongs to the ABC transporter superfamily. Spermidine/putrescine importer (TC 3.A.1.11.1) family.</text>
</comment>
<feature type="chain" id="PRO_0000286325" description="Spermidine/putrescine import ATP-binding protein PotA">
    <location>
        <begin position="1"/>
        <end position="377"/>
    </location>
</feature>
<feature type="domain" description="ABC transporter" evidence="1">
    <location>
        <begin position="18"/>
        <end position="248"/>
    </location>
</feature>
<feature type="binding site" evidence="1">
    <location>
        <begin position="50"/>
        <end position="57"/>
    </location>
    <ligand>
        <name>ATP</name>
        <dbReference type="ChEBI" id="CHEBI:30616"/>
    </ligand>
</feature>
<keyword id="KW-0067">ATP-binding</keyword>
<keyword id="KW-0997">Cell inner membrane</keyword>
<keyword id="KW-1003">Cell membrane</keyword>
<keyword id="KW-0472">Membrane</keyword>
<keyword id="KW-0547">Nucleotide-binding</keyword>
<keyword id="KW-1278">Translocase</keyword>
<keyword id="KW-0813">Transport</keyword>
<protein>
    <recommendedName>
        <fullName evidence="1">Spermidine/putrescine import ATP-binding protein PotA</fullName>
        <ecNumber evidence="1">7.6.2.11</ecNumber>
    </recommendedName>
</protein>
<gene>
    <name evidence="1" type="primary">potA</name>
    <name type="ordered locus">VP1529</name>
</gene>
<accession>Q87PH3</accession>
<organism>
    <name type="scientific">Vibrio parahaemolyticus serotype O3:K6 (strain RIMD 2210633)</name>
    <dbReference type="NCBI Taxonomy" id="223926"/>
    <lineage>
        <taxon>Bacteria</taxon>
        <taxon>Pseudomonadati</taxon>
        <taxon>Pseudomonadota</taxon>
        <taxon>Gammaproteobacteria</taxon>
        <taxon>Vibrionales</taxon>
        <taxon>Vibrionaceae</taxon>
        <taxon>Vibrio</taxon>
    </lineage>
</organism>
<sequence length="377" mass="42691">MGEIQTLNAKQQAGKPVIRLSGISKSFDGKEIIGNLNLDVNHGEFLTILGPSGCGKTTVLRMIAGFETADNGQIVLDDQDVTQVPAEHRHVNTVFQSYALFPHMTVFDNVAFGLRMQKTPAAEIEPRVMEALRMVRLEKMAQRKPHQLSGGQQQRIAIARAVVNKPKVLLLDESLSALDYKLRKQMQIELKQLQRQLGITFIFVTHDQEEALSMSDRIIVMRDGVIEQDGSPREIYEEPKNLFVARFIGEINVFNATMLERIDEKRIRAEIEGVESVVYYDKEAQAGDKLQVLLRPEDLRIEEIKESEEKGIVGHVTERTYKGMTLDSVVQLDSGMRVMVSEFFNEDDPDVDHSLGQKVAITWVESWEVVLNDKQED</sequence>
<reference key="1">
    <citation type="journal article" date="2003" name="Lancet">
        <title>Genome sequence of Vibrio parahaemolyticus: a pathogenic mechanism distinct from that of V. cholerae.</title>
        <authorList>
            <person name="Makino K."/>
            <person name="Oshima K."/>
            <person name="Kurokawa K."/>
            <person name="Yokoyama K."/>
            <person name="Uda T."/>
            <person name="Tagomori K."/>
            <person name="Iijima Y."/>
            <person name="Najima M."/>
            <person name="Nakano M."/>
            <person name="Yamashita A."/>
            <person name="Kubota Y."/>
            <person name="Kimura S."/>
            <person name="Yasunaga T."/>
            <person name="Honda T."/>
            <person name="Shinagawa H."/>
            <person name="Hattori M."/>
            <person name="Iida T."/>
        </authorList>
    </citation>
    <scope>NUCLEOTIDE SEQUENCE [LARGE SCALE GENOMIC DNA]</scope>
    <source>
        <strain>RIMD 2210633</strain>
    </source>
</reference>
<proteinExistence type="inferred from homology"/>